<evidence type="ECO:0000255" key="1">
    <source>
        <dbReference type="HAMAP-Rule" id="MF_00444"/>
    </source>
</evidence>
<proteinExistence type="inferred from homology"/>
<feature type="chain" id="PRO_0000179598" description="ATP-dependent Clp protease proteolytic subunit 2">
    <location>
        <begin position="1"/>
        <end position="203"/>
    </location>
</feature>
<feature type="active site" description="Nucleophile" evidence="1">
    <location>
        <position position="97"/>
    </location>
</feature>
<feature type="active site" evidence="1">
    <location>
        <position position="122"/>
    </location>
</feature>
<comment type="function">
    <text evidence="1">Cleaves peptides in various proteins in a process that requires ATP hydrolysis. Has a chymotrypsin-like activity. Plays a major role in the degradation of misfolded proteins.</text>
</comment>
<comment type="catalytic activity">
    <reaction evidence="1">
        <text>Hydrolysis of proteins to small peptides in the presence of ATP and magnesium. alpha-casein is the usual test substrate. In the absence of ATP, only oligopeptides shorter than five residues are hydrolyzed (such as succinyl-Leu-Tyr-|-NHMec, and Leu-Tyr-Leu-|-Tyr-Trp, in which cleavage of the -Tyr-|-Leu- and -Tyr-|-Trp bonds also occurs).</text>
        <dbReference type="EC" id="3.4.21.92"/>
    </reaction>
</comment>
<comment type="subunit">
    <text evidence="1">Fourteen ClpP subunits assemble into 2 heptameric rings which stack back to back to give a disk-like structure with a central cavity, resembling the structure of eukaryotic proteasomes.</text>
</comment>
<comment type="subcellular location">
    <subcellularLocation>
        <location evidence="1">Cytoplasm</location>
    </subcellularLocation>
</comment>
<comment type="similarity">
    <text evidence="1">Belongs to the peptidase S14 family.</text>
</comment>
<dbReference type="EC" id="3.4.21.92" evidence="1"/>
<dbReference type="EMBL" id="AF013216">
    <property type="protein sequence ID" value="AAB97819.1"/>
    <property type="molecule type" value="Genomic_DNA"/>
</dbReference>
<dbReference type="EMBL" id="CP000113">
    <property type="protein sequence ID" value="ABF86796.1"/>
    <property type="molecule type" value="Genomic_DNA"/>
</dbReference>
<dbReference type="RefSeq" id="WP_011556370.1">
    <property type="nucleotide sequence ID" value="NC_008095.1"/>
</dbReference>
<dbReference type="SMR" id="O30612"/>
<dbReference type="STRING" id="246197.MXAN_6438"/>
<dbReference type="MEROPS" id="S14.001"/>
<dbReference type="EnsemblBacteria" id="ABF86796">
    <property type="protein sequence ID" value="ABF86796"/>
    <property type="gene ID" value="MXAN_6438"/>
</dbReference>
<dbReference type="GeneID" id="41363647"/>
<dbReference type="KEGG" id="mxa:MXAN_6438"/>
<dbReference type="eggNOG" id="COG0740">
    <property type="taxonomic scope" value="Bacteria"/>
</dbReference>
<dbReference type="HOGENOM" id="CLU_058707_3_2_7"/>
<dbReference type="OrthoDB" id="9802800at2"/>
<dbReference type="BRENDA" id="3.4.21.92">
    <property type="organism ID" value="6741"/>
</dbReference>
<dbReference type="Proteomes" id="UP000002402">
    <property type="component" value="Chromosome"/>
</dbReference>
<dbReference type="GO" id="GO:0005737">
    <property type="term" value="C:cytoplasm"/>
    <property type="evidence" value="ECO:0007669"/>
    <property type="project" value="UniProtKB-SubCell"/>
</dbReference>
<dbReference type="GO" id="GO:0009368">
    <property type="term" value="C:endopeptidase Clp complex"/>
    <property type="evidence" value="ECO:0007669"/>
    <property type="project" value="TreeGrafter"/>
</dbReference>
<dbReference type="GO" id="GO:0004176">
    <property type="term" value="F:ATP-dependent peptidase activity"/>
    <property type="evidence" value="ECO:0007669"/>
    <property type="project" value="InterPro"/>
</dbReference>
<dbReference type="GO" id="GO:0051117">
    <property type="term" value="F:ATPase binding"/>
    <property type="evidence" value="ECO:0007669"/>
    <property type="project" value="TreeGrafter"/>
</dbReference>
<dbReference type="GO" id="GO:0004252">
    <property type="term" value="F:serine-type endopeptidase activity"/>
    <property type="evidence" value="ECO:0007669"/>
    <property type="project" value="UniProtKB-UniRule"/>
</dbReference>
<dbReference type="GO" id="GO:0006515">
    <property type="term" value="P:protein quality control for misfolded or incompletely synthesized proteins"/>
    <property type="evidence" value="ECO:0007669"/>
    <property type="project" value="TreeGrafter"/>
</dbReference>
<dbReference type="CDD" id="cd07017">
    <property type="entry name" value="S14_ClpP_2"/>
    <property type="match status" value="1"/>
</dbReference>
<dbReference type="FunFam" id="3.90.226.10:FF:000001">
    <property type="entry name" value="ATP-dependent Clp protease proteolytic subunit"/>
    <property type="match status" value="1"/>
</dbReference>
<dbReference type="Gene3D" id="3.90.226.10">
    <property type="entry name" value="2-enoyl-CoA Hydratase, Chain A, domain 1"/>
    <property type="match status" value="1"/>
</dbReference>
<dbReference type="HAMAP" id="MF_00444">
    <property type="entry name" value="ClpP"/>
    <property type="match status" value="1"/>
</dbReference>
<dbReference type="InterPro" id="IPR001907">
    <property type="entry name" value="ClpP"/>
</dbReference>
<dbReference type="InterPro" id="IPR029045">
    <property type="entry name" value="ClpP/crotonase-like_dom_sf"/>
</dbReference>
<dbReference type="InterPro" id="IPR023562">
    <property type="entry name" value="ClpP/TepA"/>
</dbReference>
<dbReference type="InterPro" id="IPR033135">
    <property type="entry name" value="ClpP_His_AS"/>
</dbReference>
<dbReference type="InterPro" id="IPR018215">
    <property type="entry name" value="ClpP_Ser_AS"/>
</dbReference>
<dbReference type="NCBIfam" id="TIGR00493">
    <property type="entry name" value="clpP"/>
    <property type="match status" value="1"/>
</dbReference>
<dbReference type="NCBIfam" id="NF001368">
    <property type="entry name" value="PRK00277.1"/>
    <property type="match status" value="1"/>
</dbReference>
<dbReference type="NCBIfam" id="NF009205">
    <property type="entry name" value="PRK12553.1"/>
    <property type="match status" value="1"/>
</dbReference>
<dbReference type="PANTHER" id="PTHR10381">
    <property type="entry name" value="ATP-DEPENDENT CLP PROTEASE PROTEOLYTIC SUBUNIT"/>
    <property type="match status" value="1"/>
</dbReference>
<dbReference type="PANTHER" id="PTHR10381:SF70">
    <property type="entry name" value="ATP-DEPENDENT CLP PROTEASE PROTEOLYTIC SUBUNIT"/>
    <property type="match status" value="1"/>
</dbReference>
<dbReference type="Pfam" id="PF00574">
    <property type="entry name" value="CLP_protease"/>
    <property type="match status" value="1"/>
</dbReference>
<dbReference type="PRINTS" id="PR00127">
    <property type="entry name" value="CLPPROTEASEP"/>
</dbReference>
<dbReference type="SUPFAM" id="SSF52096">
    <property type="entry name" value="ClpP/crotonase"/>
    <property type="match status" value="1"/>
</dbReference>
<dbReference type="PROSITE" id="PS00382">
    <property type="entry name" value="CLP_PROTEASE_HIS"/>
    <property type="match status" value="1"/>
</dbReference>
<dbReference type="PROSITE" id="PS00381">
    <property type="entry name" value="CLP_PROTEASE_SER"/>
    <property type="match status" value="1"/>
</dbReference>
<gene>
    <name evidence="1" type="primary">clpP2</name>
    <name type="synonym">clpP</name>
    <name type="ordered locus">MXAN_6438</name>
</gene>
<keyword id="KW-0963">Cytoplasm</keyword>
<keyword id="KW-0378">Hydrolase</keyword>
<keyword id="KW-0645">Protease</keyword>
<keyword id="KW-1185">Reference proteome</keyword>
<keyword id="KW-0720">Serine protease</keyword>
<sequence>MNVPFVIETTHRGERAYDLYSRLLKDRIIMLGTPVNDDVANIIVAQLLFLESEDPDKGINLYINSPGGSVTAGLAIYDTMQYVKCPVSTICVGQAASMGALLLLAGAKGKRYALPNSRIMIHQPLGGAQGQATDIDIQAKEILRLRSYINGLIVKHTGHTIERIEKDTERDYFMSAEDARQYGLIDEVVEKQRVIAPTPAPAK</sequence>
<name>CLPP2_MYXXD</name>
<organism>
    <name type="scientific">Myxococcus xanthus (strain DK1622)</name>
    <dbReference type="NCBI Taxonomy" id="246197"/>
    <lineage>
        <taxon>Bacteria</taxon>
        <taxon>Pseudomonadati</taxon>
        <taxon>Myxococcota</taxon>
        <taxon>Myxococcia</taxon>
        <taxon>Myxococcales</taxon>
        <taxon>Cystobacterineae</taxon>
        <taxon>Myxococcaceae</taxon>
        <taxon>Myxococcus</taxon>
    </lineage>
</organism>
<reference key="1">
    <citation type="submission" date="1997-09" db="EMBL/GenBank/DDBJ databases">
        <authorList>
            <person name="Salmi D."/>
            <person name="Creighton C."/>
            <person name="Youderian P."/>
        </authorList>
    </citation>
    <scope>NUCLEOTIDE SEQUENCE [GENOMIC DNA]</scope>
</reference>
<reference key="2">
    <citation type="journal article" date="2006" name="Proc. Natl. Acad. Sci. U.S.A.">
        <title>Evolution of sensory complexity recorded in a myxobacterial genome.</title>
        <authorList>
            <person name="Goldman B.S."/>
            <person name="Nierman W.C."/>
            <person name="Kaiser D."/>
            <person name="Slater S.C."/>
            <person name="Durkin A.S."/>
            <person name="Eisen J.A."/>
            <person name="Ronning C.M."/>
            <person name="Barbazuk W.B."/>
            <person name="Blanchard M."/>
            <person name="Field C."/>
            <person name="Halling C."/>
            <person name="Hinkle G."/>
            <person name="Iartchuk O."/>
            <person name="Kim H.S."/>
            <person name="Mackenzie C."/>
            <person name="Madupu R."/>
            <person name="Miller N."/>
            <person name="Shvartsbeyn A."/>
            <person name="Sullivan S.A."/>
            <person name="Vaudin M."/>
            <person name="Wiegand R."/>
            <person name="Kaplan H.B."/>
        </authorList>
    </citation>
    <scope>NUCLEOTIDE SEQUENCE [LARGE SCALE GENOMIC DNA]</scope>
    <source>
        <strain>DK1622</strain>
    </source>
</reference>
<accession>O30612</accession>
<accession>Q1CYG1</accession>
<protein>
    <recommendedName>
        <fullName evidence="1">ATP-dependent Clp protease proteolytic subunit 2</fullName>
        <ecNumber evidence="1">3.4.21.92</ecNumber>
    </recommendedName>
    <alternativeName>
        <fullName evidence="1">Endopeptidase Clp 2</fullName>
    </alternativeName>
</protein>